<proteinExistence type="inferred from homology"/>
<dbReference type="EC" id="5.3.1.1" evidence="1"/>
<dbReference type="EMBL" id="AE001439">
    <property type="protein sequence ID" value="AAD05764.1"/>
    <property type="molecule type" value="Genomic_DNA"/>
</dbReference>
<dbReference type="PIR" id="A71964">
    <property type="entry name" value="A71964"/>
</dbReference>
<dbReference type="RefSeq" id="WP_000161068.1">
    <property type="nucleotide sequence ID" value="NC_000921.1"/>
</dbReference>
<dbReference type="SMR" id="Q9ZMN8"/>
<dbReference type="KEGG" id="hpj:jhp_0180"/>
<dbReference type="PATRIC" id="fig|85963.30.peg.841"/>
<dbReference type="eggNOG" id="COG0149">
    <property type="taxonomic scope" value="Bacteria"/>
</dbReference>
<dbReference type="UniPathway" id="UPA00109">
    <property type="reaction ID" value="UER00189"/>
</dbReference>
<dbReference type="UniPathway" id="UPA00138"/>
<dbReference type="Proteomes" id="UP000000804">
    <property type="component" value="Chromosome"/>
</dbReference>
<dbReference type="GO" id="GO:0005829">
    <property type="term" value="C:cytosol"/>
    <property type="evidence" value="ECO:0007669"/>
    <property type="project" value="TreeGrafter"/>
</dbReference>
<dbReference type="GO" id="GO:0004807">
    <property type="term" value="F:triose-phosphate isomerase activity"/>
    <property type="evidence" value="ECO:0007669"/>
    <property type="project" value="UniProtKB-UniRule"/>
</dbReference>
<dbReference type="GO" id="GO:0006094">
    <property type="term" value="P:gluconeogenesis"/>
    <property type="evidence" value="ECO:0007669"/>
    <property type="project" value="UniProtKB-UniRule"/>
</dbReference>
<dbReference type="GO" id="GO:0046166">
    <property type="term" value="P:glyceraldehyde-3-phosphate biosynthetic process"/>
    <property type="evidence" value="ECO:0007669"/>
    <property type="project" value="TreeGrafter"/>
</dbReference>
<dbReference type="GO" id="GO:0019563">
    <property type="term" value="P:glycerol catabolic process"/>
    <property type="evidence" value="ECO:0007669"/>
    <property type="project" value="TreeGrafter"/>
</dbReference>
<dbReference type="GO" id="GO:0006096">
    <property type="term" value="P:glycolytic process"/>
    <property type="evidence" value="ECO:0007669"/>
    <property type="project" value="UniProtKB-UniRule"/>
</dbReference>
<dbReference type="CDD" id="cd00311">
    <property type="entry name" value="TIM"/>
    <property type="match status" value="1"/>
</dbReference>
<dbReference type="FunFam" id="3.20.20.70:FF:000293">
    <property type="entry name" value="Triosephosphate isomerase"/>
    <property type="match status" value="1"/>
</dbReference>
<dbReference type="Gene3D" id="3.20.20.70">
    <property type="entry name" value="Aldolase class I"/>
    <property type="match status" value="1"/>
</dbReference>
<dbReference type="HAMAP" id="MF_00147_B">
    <property type="entry name" value="TIM_B"/>
    <property type="match status" value="1"/>
</dbReference>
<dbReference type="InterPro" id="IPR013785">
    <property type="entry name" value="Aldolase_TIM"/>
</dbReference>
<dbReference type="InterPro" id="IPR035990">
    <property type="entry name" value="TIM_sf"/>
</dbReference>
<dbReference type="InterPro" id="IPR022896">
    <property type="entry name" value="TrioseP_Isoase_bac/euk"/>
</dbReference>
<dbReference type="InterPro" id="IPR000652">
    <property type="entry name" value="Triosephosphate_isomerase"/>
</dbReference>
<dbReference type="InterPro" id="IPR020861">
    <property type="entry name" value="Triosephosphate_isomerase_AS"/>
</dbReference>
<dbReference type="NCBIfam" id="NF000728">
    <property type="entry name" value="PRK00042.3-2"/>
    <property type="match status" value="1"/>
</dbReference>
<dbReference type="NCBIfam" id="NF000729">
    <property type="entry name" value="PRK00042.3-3"/>
    <property type="match status" value="1"/>
</dbReference>
<dbReference type="PANTHER" id="PTHR21139">
    <property type="entry name" value="TRIOSEPHOSPHATE ISOMERASE"/>
    <property type="match status" value="1"/>
</dbReference>
<dbReference type="PANTHER" id="PTHR21139:SF42">
    <property type="entry name" value="TRIOSEPHOSPHATE ISOMERASE"/>
    <property type="match status" value="1"/>
</dbReference>
<dbReference type="Pfam" id="PF00121">
    <property type="entry name" value="TIM"/>
    <property type="match status" value="1"/>
</dbReference>
<dbReference type="SUPFAM" id="SSF51351">
    <property type="entry name" value="Triosephosphate isomerase (TIM)"/>
    <property type="match status" value="1"/>
</dbReference>
<dbReference type="PROSITE" id="PS00171">
    <property type="entry name" value="TIM_1"/>
    <property type="match status" value="1"/>
</dbReference>
<dbReference type="PROSITE" id="PS51440">
    <property type="entry name" value="TIM_2"/>
    <property type="match status" value="1"/>
</dbReference>
<comment type="function">
    <text evidence="1">Involved in the gluconeogenesis. Catalyzes stereospecifically the conversion of dihydroxyacetone phosphate (DHAP) to D-glyceraldehyde-3-phosphate (G3P).</text>
</comment>
<comment type="catalytic activity">
    <reaction evidence="1">
        <text>D-glyceraldehyde 3-phosphate = dihydroxyacetone phosphate</text>
        <dbReference type="Rhea" id="RHEA:18585"/>
        <dbReference type="ChEBI" id="CHEBI:57642"/>
        <dbReference type="ChEBI" id="CHEBI:59776"/>
        <dbReference type="EC" id="5.3.1.1"/>
    </reaction>
</comment>
<comment type="pathway">
    <text evidence="1">Carbohydrate biosynthesis; gluconeogenesis.</text>
</comment>
<comment type="pathway">
    <text evidence="1">Carbohydrate degradation; glycolysis; D-glyceraldehyde 3-phosphate from glycerone phosphate: step 1/1.</text>
</comment>
<comment type="subunit">
    <text evidence="1">Homodimer.</text>
</comment>
<comment type="subcellular location">
    <subcellularLocation>
        <location evidence="1">Cytoplasm</location>
    </subcellularLocation>
</comment>
<comment type="similarity">
    <text evidence="1">Belongs to the triosephosphate isomerase family.</text>
</comment>
<feature type="chain" id="PRO_0000090229" description="Triosephosphate isomerase">
    <location>
        <begin position="1"/>
        <end position="234"/>
    </location>
</feature>
<feature type="active site" description="Electrophile" evidence="1">
    <location>
        <position position="90"/>
    </location>
</feature>
<feature type="active site" description="Proton acceptor" evidence="1">
    <location>
        <position position="159"/>
    </location>
</feature>
<feature type="binding site" evidence="1">
    <location>
        <begin position="8"/>
        <end position="10"/>
    </location>
    <ligand>
        <name>substrate</name>
    </ligand>
</feature>
<feature type="binding site" evidence="1">
    <location>
        <position position="165"/>
    </location>
    <ligand>
        <name>substrate</name>
    </ligand>
</feature>
<feature type="binding site" evidence="1">
    <location>
        <position position="197"/>
    </location>
    <ligand>
        <name>substrate</name>
    </ligand>
</feature>
<organism>
    <name type="scientific">Helicobacter pylori (strain J99 / ATCC 700824)</name>
    <name type="common">Campylobacter pylori J99</name>
    <dbReference type="NCBI Taxonomy" id="85963"/>
    <lineage>
        <taxon>Bacteria</taxon>
        <taxon>Pseudomonadati</taxon>
        <taxon>Campylobacterota</taxon>
        <taxon>Epsilonproteobacteria</taxon>
        <taxon>Campylobacterales</taxon>
        <taxon>Helicobacteraceae</taxon>
        <taxon>Helicobacter</taxon>
    </lineage>
</organism>
<sequence length="234" mass="26499">MTKIAMANFKSAMPVFKSHAYLKELEKTLKPQHFDRVFVFPDFLGLLPNAFLHFTLGAQNAYPRDCGAFTGEITSKHLEELKIHTLLIGHSERRVLLKESPSFLKEKFDFFKGKNFKIVYCIGEDLTTREKGFRAVKEFLSEQLENIDLNYSNLIVAYEPIWAIGTKKSASLEDIYLTHGFLKQILNQKTPLLYGGSVNAQNAKEILGIDSVDGLLIGSASLELENFKTIISFL</sequence>
<accession>Q9ZMN8</accession>
<reference key="1">
    <citation type="journal article" date="1999" name="Nature">
        <title>Genomic sequence comparison of two unrelated isolates of the human gastric pathogen Helicobacter pylori.</title>
        <authorList>
            <person name="Alm R.A."/>
            <person name="Ling L.-S.L."/>
            <person name="Moir D.T."/>
            <person name="King B.L."/>
            <person name="Brown E.D."/>
            <person name="Doig P.C."/>
            <person name="Smith D.R."/>
            <person name="Noonan B."/>
            <person name="Guild B.C."/>
            <person name="deJonge B.L."/>
            <person name="Carmel G."/>
            <person name="Tummino P.J."/>
            <person name="Caruso A."/>
            <person name="Uria-Nickelsen M."/>
            <person name="Mills D.M."/>
            <person name="Ives C."/>
            <person name="Gibson R."/>
            <person name="Merberg D."/>
            <person name="Mills S.D."/>
            <person name="Jiang Q."/>
            <person name="Taylor D.E."/>
            <person name="Vovis G.F."/>
            <person name="Trust T.J."/>
        </authorList>
    </citation>
    <scope>NUCLEOTIDE SEQUENCE [LARGE SCALE GENOMIC DNA]</scope>
    <source>
        <strain>J99 / ATCC 700824</strain>
    </source>
</reference>
<protein>
    <recommendedName>
        <fullName evidence="1">Triosephosphate isomerase</fullName>
        <shortName evidence="1">TIM</shortName>
        <shortName evidence="1">TPI</shortName>
        <ecNumber evidence="1">5.3.1.1</ecNumber>
    </recommendedName>
    <alternativeName>
        <fullName evidence="1">Triose-phosphate isomerase</fullName>
    </alternativeName>
</protein>
<keyword id="KW-0963">Cytoplasm</keyword>
<keyword id="KW-0312">Gluconeogenesis</keyword>
<keyword id="KW-0324">Glycolysis</keyword>
<keyword id="KW-0413">Isomerase</keyword>
<gene>
    <name evidence="1" type="primary">tpiA</name>
    <name type="synonym">tpi</name>
    <name type="ordered locus">jhp_0180</name>
</gene>
<name>TPIS_HELPJ</name>
<evidence type="ECO:0000255" key="1">
    <source>
        <dbReference type="HAMAP-Rule" id="MF_00147"/>
    </source>
</evidence>